<gene>
    <name evidence="5" type="primary">okaE</name>
</gene>
<keyword id="KW-0223">Dioxygenase</keyword>
<keyword id="KW-0408">Iron</keyword>
<keyword id="KW-0479">Metal-binding</keyword>
<keyword id="KW-0560">Oxidoreductase</keyword>
<organism>
    <name type="scientific">Penicillium ochrochloron</name>
    <dbReference type="NCBI Taxonomy" id="69780"/>
    <lineage>
        <taxon>Eukaryota</taxon>
        <taxon>Fungi</taxon>
        <taxon>Dikarya</taxon>
        <taxon>Ascomycota</taxon>
        <taxon>Pezizomycotina</taxon>
        <taxon>Eurotiomycetes</taxon>
        <taxon>Eurotiomycetidae</taxon>
        <taxon>Eurotiales</taxon>
        <taxon>Aspergillaceae</taxon>
        <taxon>Penicillium</taxon>
    </lineage>
</organism>
<name>OKAE_PENOH</name>
<protein>
    <recommendedName>
        <fullName evidence="5">Iron/alpha-ketoglutarate-dependent dioxygenase okaE</fullName>
        <ecNumber evidence="3">1.14.20.-</ecNumber>
    </recommendedName>
    <alternativeName>
        <fullName evidence="5">Okaramines biosynthesis cluster protein E</fullName>
    </alternativeName>
</protein>
<sequence>MTLTENVMKPQIQRFTRDHDPKVLWQVVEEDGAVIIEGFLPHEVIQKFDCELDVRSKATKGGEMNQEFYQMPVPTTTKWMNDLTATCPTFRHEILNNDILHSLCNVAFEPHGDYWLLNGMAMEMMPGNPTQQIHNDHGTHPILQYLRPDAPAPVFSIITAVTEFTESNGATRVILGSHRWPQGQKAKDDQAVRAALQPGDALVMHRSTKHGGAAHDADNQDHRRLLLTCMGTCQLAPYETNVTVPRPIVESMTPLAQKMIGWRSTRPVISNVTGLNTVRMKHLENQIELKSNVPLNVGGC</sequence>
<accession>A0A2Z5U507</accession>
<feature type="chain" id="PRO_0000461560" description="Iron/alpha-ketoglutarate-dependent dioxygenase okaE">
    <location>
        <begin position="1"/>
        <end position="300"/>
    </location>
</feature>
<feature type="binding site" evidence="2">
    <location>
        <position position="134"/>
    </location>
    <ligand>
        <name>Fe cation</name>
        <dbReference type="ChEBI" id="CHEBI:24875"/>
    </ligand>
</feature>
<feature type="binding site" evidence="2">
    <location>
        <position position="136"/>
    </location>
    <ligand>
        <name>Fe cation</name>
        <dbReference type="ChEBI" id="CHEBI:24875"/>
    </ligand>
</feature>
<feature type="binding site" evidence="2">
    <location>
        <position position="210"/>
    </location>
    <ligand>
        <name>Fe cation</name>
        <dbReference type="ChEBI" id="CHEBI:24875"/>
    </ligand>
</feature>
<evidence type="ECO:0000250" key="1">
    <source>
        <dbReference type="UniProtKB" id="Q4WAW9"/>
    </source>
</evidence>
<evidence type="ECO:0000250" key="2">
    <source>
        <dbReference type="UniProtKB" id="Q5AR53"/>
    </source>
</evidence>
<evidence type="ECO:0000269" key="3">
    <source>
    </source>
</evidence>
<evidence type="ECO:0000269" key="4">
    <source>
    </source>
</evidence>
<evidence type="ECO:0000303" key="5">
    <source>
    </source>
</evidence>
<evidence type="ECO:0000305" key="6"/>
<comment type="function">
    <text evidence="3 4">Iron/alpha-ketoglutarate-dependent dioxygenase; part of the gene cluster that mediates the biosynthesis of okaramine B, a prenylated indole alkaloid that possesses an unusual octacyclic ring system, including a four-membered azetidine ring and an eight-membered azocine ring, and that exhibits insecticidal activity against silkworm larvae (PubMed:28631282, PubMed:29384650). Within the pathway, okaE forms the unusual 2-dimethyl-3-methyl-azetidine ring to yield 12-deshydroxyl okaramine E from okaramine A (PubMed:28631282). OkaE also catalyzes the hydroxylation of 12-deshydroxyl okaramine E to produce okaramine E (PubMed:28631282). The biosynthesis begins with the NRPS okaA that condenses two tryptophan molecules into cyclo(L-Trp-L-Trp). Prenylation by the prenyltransferase okaC then leads to the formation of cyclo(N8-(alpha,alpha-dimethylallyl)-L-Trp-6a-(alpha,alpha-dime-thylallyl)-L-Trp). This is followed by indole 2,3-epoxidation by the FAD-dependent monooxygenase okaB to facilitate the formation of the hexahydropyrrolo[2,3-b]indole (HPI) moiety of okaramine C. The cytochrome P450 monooxygenase okaD then likely catalyzes formation of the eight-membered ring of okaramine A. The dioxygenase okaE further forms the unusual 2-dimethyl-3-methyl-azetidine ring to yield 12-deshydroxyl okaramine E, as well as the hydroxylation of 12-deshydroxyl okaramine E to produce okaramine E. The cytochrome P450 monoxygenase okaG converts 12-deshydroxyl okaramine E into 3-desmethyl okaramine B which is further methylated by the methyltransferase okaF into okaramine B. In a shunt pathway, okaG and okaF together are also able to convert okaramine E into okaramine D (PubMed:28631282, PubMed:29384650). Okaramine H is produced by nonenzymatic conversion from okaramine A (PubMed:29384650).</text>
</comment>
<comment type="catalytic activity">
    <reaction evidence="3">
        <text>okaramine A + 2-oxoglutarate + AH2 + O2 = 12-deshydroxyl okaramine E + succinate + A + CO2 + H2O</text>
        <dbReference type="Rhea" id="RHEA:82719"/>
        <dbReference type="ChEBI" id="CHEBI:13193"/>
        <dbReference type="ChEBI" id="CHEBI:15377"/>
        <dbReference type="ChEBI" id="CHEBI:15379"/>
        <dbReference type="ChEBI" id="CHEBI:16526"/>
        <dbReference type="ChEBI" id="CHEBI:16810"/>
        <dbReference type="ChEBI" id="CHEBI:17499"/>
        <dbReference type="ChEBI" id="CHEBI:30031"/>
        <dbReference type="ChEBI" id="CHEBI:232464"/>
        <dbReference type="ChEBI" id="CHEBI:232466"/>
    </reaction>
    <physiologicalReaction direction="left-to-right" evidence="3">
        <dbReference type="Rhea" id="RHEA:82720"/>
    </physiologicalReaction>
</comment>
<comment type="catalytic activity">
    <reaction evidence="3">
        <text>12-deshydroxyl okaramine E + 2-oxoglutarate + O2 = okaramine E + succinate + CO2</text>
        <dbReference type="Rhea" id="RHEA:82707"/>
        <dbReference type="ChEBI" id="CHEBI:15379"/>
        <dbReference type="ChEBI" id="CHEBI:16526"/>
        <dbReference type="ChEBI" id="CHEBI:16810"/>
        <dbReference type="ChEBI" id="CHEBI:30031"/>
        <dbReference type="ChEBI" id="CHEBI:232465"/>
        <dbReference type="ChEBI" id="CHEBI:232466"/>
    </reaction>
    <physiologicalReaction direction="left-to-right" evidence="3">
        <dbReference type="Rhea" id="RHEA:82708"/>
    </physiologicalReaction>
</comment>
<comment type="catalytic activity">
    <reaction evidence="3">
        <text>okaramine A + 2-oxoglutarate + O2 = okaramine E + succinate + CO2</text>
        <dbReference type="Rhea" id="RHEA:83275"/>
        <dbReference type="ChEBI" id="CHEBI:15379"/>
        <dbReference type="ChEBI" id="CHEBI:16526"/>
        <dbReference type="ChEBI" id="CHEBI:16810"/>
        <dbReference type="ChEBI" id="CHEBI:30031"/>
        <dbReference type="ChEBI" id="CHEBI:232464"/>
        <dbReference type="ChEBI" id="CHEBI:232465"/>
    </reaction>
    <physiologicalReaction direction="left-to-right" evidence="3">
        <dbReference type="Rhea" id="RHEA:83276"/>
    </physiologicalReaction>
</comment>
<comment type="cofactor">
    <cofactor evidence="2">
        <name>Fe cation</name>
        <dbReference type="ChEBI" id="CHEBI:24875"/>
    </cofactor>
</comment>
<comment type="pathway">
    <text evidence="3 4">Alkaloid biosynthesis.</text>
</comment>
<comment type="pathway">
    <text>Secondary metabolite biosynthesis; terpenoid biosynthesis.</text>
</comment>
<comment type="subunit">
    <text evidence="1">Homodimer.</text>
</comment>
<comment type="disruption phenotype">
    <text evidence="4">Abolishes the production of okaramine B and leads to the accumulation of okaramines A and H.</text>
</comment>
<comment type="similarity">
    <text evidence="6">Belongs to the PhyH family.</text>
</comment>
<dbReference type="EC" id="1.14.20.-" evidence="3"/>
<dbReference type="EMBL" id="LC316945">
    <property type="protein sequence ID" value="BBB04331.1"/>
    <property type="molecule type" value="Genomic_DNA"/>
</dbReference>
<dbReference type="SMR" id="A0A2Z5U507"/>
<dbReference type="UniPathway" id="UPA00213"/>
<dbReference type="GO" id="GO:0051213">
    <property type="term" value="F:dioxygenase activity"/>
    <property type="evidence" value="ECO:0007669"/>
    <property type="project" value="UniProtKB-KW"/>
</dbReference>
<dbReference type="GO" id="GO:0046872">
    <property type="term" value="F:metal ion binding"/>
    <property type="evidence" value="ECO:0007669"/>
    <property type="project" value="UniProtKB-KW"/>
</dbReference>
<dbReference type="GO" id="GO:0009058">
    <property type="term" value="P:biosynthetic process"/>
    <property type="evidence" value="ECO:0007669"/>
    <property type="project" value="UniProtKB-ARBA"/>
</dbReference>
<dbReference type="Gene3D" id="2.60.120.620">
    <property type="entry name" value="q2cbj1_9rhob like domain"/>
    <property type="match status" value="1"/>
</dbReference>
<dbReference type="InterPro" id="IPR008775">
    <property type="entry name" value="Phytyl_CoA_dOase-like"/>
</dbReference>
<dbReference type="PANTHER" id="PTHR20883:SF41">
    <property type="entry name" value="IRON_ALPHA-KETOGLUTARATE-DEPENDENT DIOXYGENASE ASQJ"/>
    <property type="match status" value="1"/>
</dbReference>
<dbReference type="PANTHER" id="PTHR20883">
    <property type="entry name" value="PHYTANOYL-COA DIOXYGENASE DOMAIN CONTAINING 1"/>
    <property type="match status" value="1"/>
</dbReference>
<dbReference type="Pfam" id="PF05721">
    <property type="entry name" value="PhyH"/>
    <property type="match status" value="1"/>
</dbReference>
<dbReference type="SUPFAM" id="SSF51197">
    <property type="entry name" value="Clavaminate synthase-like"/>
    <property type="match status" value="1"/>
</dbReference>
<proteinExistence type="evidence at protein level"/>
<reference key="1">
    <citation type="journal article" date="2018" name="ACS Chem. Biol.">
        <title>Biosynthesis and Structure-Activity Relationship Studies of Okaramines That Target Insect Glutamate-Gated Chloride Channels.</title>
        <authorList>
            <person name="Kato N."/>
            <person name="Furutani S."/>
            <person name="Otaka J."/>
            <person name="Noguchi A."/>
            <person name="Kinugasa K."/>
            <person name="Kai K."/>
            <person name="Hayashi H."/>
            <person name="Ihara M."/>
            <person name="Takahashi S."/>
            <person name="Matsuda K."/>
            <person name="Osada H."/>
        </authorList>
    </citation>
    <scope>NUCLEOTIDE SEQUENCE [GENOMIC DNA]</scope>
    <scope>FUNCTION</scope>
    <scope>DISRUPTION PHENOTYPE</scope>
    <scope>PATHWAY</scope>
    <source>
        <strain>ATCC 90288 / AK-40</strain>
    </source>
</reference>
<reference key="2">
    <citation type="journal article" date="2017" name="Angew. Chem. Int. Ed.">
        <title>Biosynthesis of Complex Indole Alkaloids: Elucidation of the Concise Pathway of Okaramines.</title>
        <authorList>
            <person name="Lai C.Y."/>
            <person name="Lo I.W."/>
            <person name="Hewage R.T."/>
            <person name="Chen Y.C."/>
            <person name="Chen C.T."/>
            <person name="Lee C.F."/>
            <person name="Lin S."/>
            <person name="Tang M.C."/>
            <person name="Lin H.C."/>
        </authorList>
    </citation>
    <scope>FUNCTION</scope>
    <scope>CATALYTIC ACTIVITY</scope>
    <scope>PATHWAY</scope>
</reference>